<sequence>MKEFQVYLELDRSRQHDFLYPLIFREYIYALAYDHGLNSSILVENLGYDNKSSLLIVKRLITRMYQQNHLILSANDSNKNQFLGYNKNLYSQIISEGFAVSVEIPFSLQLISSLEEEEIVKSYNLRSIHSIFPFFEDKFPYLNYVSDVRIPYPIHLEILVQTLRYWVKDASSFHLLRLFLYEYFNWNSLITPKKWISTFSQSNPRLFLFLYNFYVCEYESIFIFLRKKSSYLRLTSSGVLFERIYFYAKIEHRVEVLDKDFPSTLWFFKDPFIHYVRYKGKSILSSKNTPFFMNKWKYYLIHLWQCHFYVWSQPGKIHINQLSEHSFYFLGYFSNVRLNPSVVRSQMLENSFIIENVMKKLDTIIPIIPLIRSLAKANFCNVLGHPISKPVWADSSDFDIIDRFLRICRNLSHYYNGSSKKKSLYRIKYILRLSCIKTLARKHKSTVRVFLKRLGSEVLEEFFTEEEEILSLILPRASSTLQRLYRGRIWYLDIFYFHQ</sequence>
<reference key="1">
    <citation type="journal article" date="2004" name="Am. J. Bot.">
        <title>A phylogeny of legumes (Leguminosae) based on analysis of the plastid matK gene resolves many well-supported subclades within the family.</title>
        <authorList>
            <person name="Wojciechowski M.F."/>
            <person name="Lavin M."/>
            <person name="Sanderson M.J."/>
        </authorList>
        <dbReference type="AGRICOLA" id="IND43661289"/>
    </citation>
    <scope>NUCLEOTIDE SEQUENCE [GENOMIC DNA]</scope>
</reference>
<evidence type="ECO:0000255" key="1">
    <source>
        <dbReference type="HAMAP-Rule" id="MF_01390"/>
    </source>
</evidence>
<proteinExistence type="inferred from homology"/>
<protein>
    <recommendedName>
        <fullName evidence="1">Maturase K</fullName>
    </recommendedName>
    <alternativeName>
        <fullName evidence="1">Intron maturase</fullName>
    </alternativeName>
</protein>
<dbReference type="EMBL" id="AY386928">
    <property type="protein sequence ID" value="AAQ92006.1"/>
    <property type="molecule type" value="Genomic_DNA"/>
</dbReference>
<dbReference type="RefSeq" id="YP_010118598.1">
    <property type="nucleotide sequence ID" value="NC_056137.1"/>
</dbReference>
<dbReference type="GeneID" id="65319252"/>
<dbReference type="GO" id="GO:0009507">
    <property type="term" value="C:chloroplast"/>
    <property type="evidence" value="ECO:0007669"/>
    <property type="project" value="UniProtKB-SubCell"/>
</dbReference>
<dbReference type="GO" id="GO:0003723">
    <property type="term" value="F:RNA binding"/>
    <property type="evidence" value="ECO:0007669"/>
    <property type="project" value="UniProtKB-KW"/>
</dbReference>
<dbReference type="GO" id="GO:0006397">
    <property type="term" value="P:mRNA processing"/>
    <property type="evidence" value="ECO:0007669"/>
    <property type="project" value="UniProtKB-KW"/>
</dbReference>
<dbReference type="GO" id="GO:0008380">
    <property type="term" value="P:RNA splicing"/>
    <property type="evidence" value="ECO:0007669"/>
    <property type="project" value="UniProtKB-UniRule"/>
</dbReference>
<dbReference type="GO" id="GO:0008033">
    <property type="term" value="P:tRNA processing"/>
    <property type="evidence" value="ECO:0007669"/>
    <property type="project" value="UniProtKB-KW"/>
</dbReference>
<dbReference type="HAMAP" id="MF_01390">
    <property type="entry name" value="MatK"/>
    <property type="match status" value="1"/>
</dbReference>
<dbReference type="InterPro" id="IPR024937">
    <property type="entry name" value="Domain_X"/>
</dbReference>
<dbReference type="InterPro" id="IPR002866">
    <property type="entry name" value="Maturase_MatK"/>
</dbReference>
<dbReference type="InterPro" id="IPR024942">
    <property type="entry name" value="Maturase_MatK_N"/>
</dbReference>
<dbReference type="PANTHER" id="PTHR34811">
    <property type="entry name" value="MATURASE K"/>
    <property type="match status" value="1"/>
</dbReference>
<dbReference type="PANTHER" id="PTHR34811:SF1">
    <property type="entry name" value="MATURASE K"/>
    <property type="match status" value="1"/>
</dbReference>
<dbReference type="Pfam" id="PF01348">
    <property type="entry name" value="Intron_maturas2"/>
    <property type="match status" value="1"/>
</dbReference>
<dbReference type="Pfam" id="PF01824">
    <property type="entry name" value="MatK_N"/>
    <property type="match status" value="1"/>
</dbReference>
<gene>
    <name evidence="1" type="primary">matK</name>
</gene>
<feature type="chain" id="PRO_0000143411" description="Maturase K">
    <location>
        <begin position="1"/>
        <end position="499"/>
    </location>
</feature>
<keyword id="KW-0150">Chloroplast</keyword>
<keyword id="KW-0507">mRNA processing</keyword>
<keyword id="KW-0934">Plastid</keyword>
<keyword id="KW-0694">RNA-binding</keyword>
<keyword id="KW-0819">tRNA processing</keyword>
<organism>
    <name type="scientific">Gymnocladus chinensis</name>
    <name type="common">Soap tree</name>
    <name type="synonym">Yunnan bean</name>
    <dbReference type="NCBI Taxonomy" id="66097"/>
    <lineage>
        <taxon>Eukaryota</taxon>
        <taxon>Viridiplantae</taxon>
        <taxon>Streptophyta</taxon>
        <taxon>Embryophyta</taxon>
        <taxon>Tracheophyta</taxon>
        <taxon>Spermatophyta</taxon>
        <taxon>Magnoliopsida</taxon>
        <taxon>eudicotyledons</taxon>
        <taxon>Gunneridae</taxon>
        <taxon>Pentapetalae</taxon>
        <taxon>rosids</taxon>
        <taxon>fabids</taxon>
        <taxon>Fabales</taxon>
        <taxon>Fabaceae</taxon>
        <taxon>Caesalpinioideae</taxon>
        <taxon>Umtiza clade</taxon>
        <taxon>Gymnocladus</taxon>
    </lineage>
</organism>
<comment type="function">
    <text evidence="1">Usually encoded in the trnK tRNA gene intron. Probably assists in splicing its own and other chloroplast group II introns.</text>
</comment>
<comment type="subcellular location">
    <subcellularLocation>
        <location>Plastid</location>
        <location>Chloroplast</location>
    </subcellularLocation>
</comment>
<comment type="similarity">
    <text evidence="1">Belongs to the intron maturase 2 family. MatK subfamily.</text>
</comment>
<accession>Q5YJX4</accession>
<geneLocation type="chloroplast"/>
<name>MATK_GYMCH</name>